<gene>
    <name type="primary">PSAH</name>
</gene>
<protein>
    <recommendedName>
        <fullName>Photosystem I reaction center subunit VI</fullName>
    </recommendedName>
    <alternativeName>
        <fullName>Light-harvesting complex I 11 kDa protein</fullName>
    </alternativeName>
    <alternativeName>
        <fullName>PSI-H</fullName>
    </alternativeName>
</protein>
<accession>P20121</accession>
<keyword id="KW-0002">3D-structure</keyword>
<keyword id="KW-0150">Chloroplast</keyword>
<keyword id="KW-0903">Direct protein sequencing</keyword>
<keyword id="KW-0472">Membrane</keyword>
<keyword id="KW-0602">Photosynthesis</keyword>
<keyword id="KW-0603">Photosystem I</keyword>
<keyword id="KW-0934">Plastid</keyword>
<keyword id="KW-0793">Thylakoid</keyword>
<keyword id="KW-0812">Transmembrane</keyword>
<sequence>KYGDKSVYFDLEDIGNTTGQWDLYGSDAPSPYSXLQ</sequence>
<dbReference type="PIR" id="S00317">
    <property type="entry name" value="S00317"/>
</dbReference>
<dbReference type="PDB" id="6ZOO">
    <property type="method" value="EM"/>
    <property type="resolution" value="2.74 A"/>
    <property type="chains" value="H=2-36"/>
</dbReference>
<dbReference type="PDBsum" id="6ZOO"/>
<dbReference type="DIP" id="DIP-60288N"/>
<dbReference type="IntAct" id="P20121">
    <property type="interactions" value="1"/>
</dbReference>
<dbReference type="GO" id="GO:0009535">
    <property type="term" value="C:chloroplast thylakoid membrane"/>
    <property type="evidence" value="ECO:0007669"/>
    <property type="project" value="UniProtKB-SubCell"/>
</dbReference>
<dbReference type="GO" id="GO:0009538">
    <property type="term" value="C:photosystem I reaction center"/>
    <property type="evidence" value="ECO:0007669"/>
    <property type="project" value="InterPro"/>
</dbReference>
<dbReference type="GO" id="GO:0015979">
    <property type="term" value="P:photosynthesis"/>
    <property type="evidence" value="ECO:0007669"/>
    <property type="project" value="UniProtKB-KW"/>
</dbReference>
<dbReference type="InterPro" id="IPR004928">
    <property type="entry name" value="PSI_PsaH"/>
</dbReference>
<dbReference type="PANTHER" id="PTHR34787">
    <property type="entry name" value="PHOTOSYSTEM I REACTION CENTER SUBUNIT VI-2, CHLOROPLASTIC"/>
    <property type="match status" value="1"/>
</dbReference>
<dbReference type="PANTHER" id="PTHR34787:SF1">
    <property type="entry name" value="PHOTOSYSTEM I REACTION CENTER SUBUNIT VI-2, CHLOROPLASTIC"/>
    <property type="match status" value="1"/>
</dbReference>
<dbReference type="Pfam" id="PF03244">
    <property type="entry name" value="PSI_PsaH"/>
    <property type="match status" value="1"/>
</dbReference>
<proteinExistence type="evidence at protein level"/>
<reference key="1">
    <citation type="journal article" date="1988" name="FEBS Lett.">
        <title>N-terminal amino acid sequence analysis of the subunits of pea photosystem I.</title>
        <authorList>
            <person name="Dunn P.P.J."/>
            <person name="Packman L.C."/>
            <person name="Pappin D."/>
            <person name="Gray J.C."/>
        </authorList>
    </citation>
    <scope>PROTEIN SEQUENCE</scope>
</reference>
<feature type="chain" id="PRO_0000219143" description="Photosystem I reaction center subunit VI">
    <location>
        <begin position="1"/>
        <end position="36" status="greater than"/>
    </location>
</feature>
<feature type="non-terminal residue">
    <location>
        <position position="36"/>
    </location>
</feature>
<organism>
    <name type="scientific">Pisum sativum</name>
    <name type="common">Garden pea</name>
    <name type="synonym">Lathyrus oleraceus</name>
    <dbReference type="NCBI Taxonomy" id="3888"/>
    <lineage>
        <taxon>Eukaryota</taxon>
        <taxon>Viridiplantae</taxon>
        <taxon>Streptophyta</taxon>
        <taxon>Embryophyta</taxon>
        <taxon>Tracheophyta</taxon>
        <taxon>Spermatophyta</taxon>
        <taxon>Magnoliopsida</taxon>
        <taxon>eudicotyledons</taxon>
        <taxon>Gunneridae</taxon>
        <taxon>Pentapetalae</taxon>
        <taxon>rosids</taxon>
        <taxon>fabids</taxon>
        <taxon>Fabales</taxon>
        <taxon>Fabaceae</taxon>
        <taxon>Papilionoideae</taxon>
        <taxon>50 kb inversion clade</taxon>
        <taxon>NPAAA clade</taxon>
        <taxon>Hologalegina</taxon>
        <taxon>IRL clade</taxon>
        <taxon>Fabeae</taxon>
        <taxon>Pisum</taxon>
    </lineage>
</organism>
<evidence type="ECO:0000305" key="1"/>
<comment type="function">
    <text>Possible role could be the docking of the LHC I antenna complex to the core complex.</text>
</comment>
<comment type="subcellular location">
    <subcellularLocation>
        <location>Plastid</location>
        <location>Chloroplast thylakoid membrane</location>
        <topology>Single-pass membrane protein</topology>
    </subcellularLocation>
</comment>
<comment type="similarity">
    <text evidence="1">Belongs to the psaH family.</text>
</comment>
<name>PSAH_PEA</name>